<keyword id="KW-0227">DNA damage</keyword>
<keyword id="KW-0234">DNA repair</keyword>
<keyword id="KW-0326">Glycosidase</keyword>
<keyword id="KW-0378">Hydrolase</keyword>
<keyword id="KW-0456">Lyase</keyword>
<keyword id="KW-0511">Multifunctional enzyme</keyword>
<keyword id="KW-1185">Reference proteome</keyword>
<gene>
    <name evidence="1" type="primary">ogg</name>
    <name type="ordered locus">STK_12190</name>
</gene>
<proteinExistence type="inferred from homology"/>
<organism>
    <name type="scientific">Sulfurisphaera tokodaii (strain DSM 16993 / JCM 10545 / NBRC 100140 / 7)</name>
    <name type="common">Sulfolobus tokodaii</name>
    <dbReference type="NCBI Taxonomy" id="273063"/>
    <lineage>
        <taxon>Archaea</taxon>
        <taxon>Thermoproteota</taxon>
        <taxon>Thermoprotei</taxon>
        <taxon>Sulfolobales</taxon>
        <taxon>Sulfolobaceae</taxon>
        <taxon>Sulfurisphaera</taxon>
    </lineage>
</organism>
<evidence type="ECO:0000255" key="1">
    <source>
        <dbReference type="HAMAP-Rule" id="MF_00241"/>
    </source>
</evidence>
<protein>
    <recommendedName>
        <fullName evidence="1">8-oxoguanine DNA glycosylase/AP lyase</fullName>
    </recommendedName>
    <domain>
        <recommendedName>
            <fullName evidence="1">8-oxoguanine DNA glycosylase</fullName>
            <shortName evidence="1">8-oxoG DNA glycosylase</shortName>
            <ecNumber evidence="1">3.2.2.-</ecNumber>
        </recommendedName>
    </domain>
    <domain>
        <recommendedName>
            <fullName evidence="1">DNA-(apurinic or apyrimidinic site) lyase</fullName>
            <shortName evidence="1">AP lyase</shortName>
            <ecNumber evidence="1">4.2.99.18</ecNumber>
        </recommendedName>
    </domain>
</protein>
<feature type="chain" id="PRO_0000159567" description="8-oxoguanine DNA glycosylase/AP lyase">
    <location>
        <begin position="1"/>
        <end position="204"/>
    </location>
</feature>
<feature type="active site" evidence="1">
    <location>
        <position position="128"/>
    </location>
</feature>
<feature type="active site" evidence="1">
    <location>
        <position position="146"/>
    </location>
</feature>
<feature type="site" description="Important for guanine/8-oxoguanine distinction" evidence="1">
    <location>
        <position position="204"/>
    </location>
</feature>
<sequence>MLRELVKNKKLRARVLERAEEFKLNNRAEENVWFRELILCILTSNSSFISAYKALNYIMDEIFSLSEDQMSKRLRLAGYRFYNLKAKYIANARKLYGNLKTKIKPIADYSQEEARQYIINNIDGLGLKESSHFLRNVGYFDLAIIDRHVLHFLNEIGTSNLKIKNKKDYYLAESILKSISINLGIQVGLLDLYIFFKQTNTIVK</sequence>
<name>OGG1_SULTO</name>
<reference key="1">
    <citation type="journal article" date="2001" name="DNA Res.">
        <title>Complete genome sequence of an aerobic thermoacidophilic Crenarchaeon, Sulfolobus tokodaii strain7.</title>
        <authorList>
            <person name="Kawarabayasi Y."/>
            <person name="Hino Y."/>
            <person name="Horikawa H."/>
            <person name="Jin-no K."/>
            <person name="Takahashi M."/>
            <person name="Sekine M."/>
            <person name="Baba S."/>
            <person name="Ankai A."/>
            <person name="Kosugi H."/>
            <person name="Hosoyama A."/>
            <person name="Fukui S."/>
            <person name="Nagai Y."/>
            <person name="Nishijima K."/>
            <person name="Otsuka R."/>
            <person name="Nakazawa H."/>
            <person name="Takamiya M."/>
            <person name="Kato Y."/>
            <person name="Yoshizawa T."/>
            <person name="Tanaka T."/>
            <person name="Kudoh Y."/>
            <person name="Yamazaki J."/>
            <person name="Kushida N."/>
            <person name="Oguchi A."/>
            <person name="Aoki K."/>
            <person name="Masuda S."/>
            <person name="Yanagii M."/>
            <person name="Nishimura M."/>
            <person name="Yamagishi A."/>
            <person name="Oshima T."/>
            <person name="Kikuchi H."/>
        </authorList>
    </citation>
    <scope>NUCLEOTIDE SEQUENCE [LARGE SCALE GENOMIC DNA]</scope>
    <source>
        <strain>DSM 16993 / JCM 10545 / NBRC 100140 / 7</strain>
    </source>
</reference>
<dbReference type="EC" id="3.2.2.-" evidence="1"/>
<dbReference type="EC" id="4.2.99.18" evidence="1"/>
<dbReference type="EMBL" id="BA000023">
    <property type="protein sequence ID" value="BAB66261.1"/>
    <property type="molecule type" value="Genomic_DNA"/>
</dbReference>
<dbReference type="RefSeq" id="WP_010979239.1">
    <property type="nucleotide sequence ID" value="NC_003106.2"/>
</dbReference>
<dbReference type="SMR" id="Q972A8"/>
<dbReference type="STRING" id="273063.STK_12190"/>
<dbReference type="GeneID" id="1459218"/>
<dbReference type="KEGG" id="sto:STK_12190"/>
<dbReference type="PATRIC" id="fig|273063.9.peg.1377"/>
<dbReference type="eggNOG" id="arCOG04357">
    <property type="taxonomic scope" value="Archaea"/>
</dbReference>
<dbReference type="OrthoDB" id="35941at2157"/>
<dbReference type="Proteomes" id="UP000001015">
    <property type="component" value="Chromosome"/>
</dbReference>
<dbReference type="GO" id="GO:0140078">
    <property type="term" value="F:class I DNA-(apurinic or apyrimidinic site) endonuclease activity"/>
    <property type="evidence" value="ECO:0007669"/>
    <property type="project" value="UniProtKB-EC"/>
</dbReference>
<dbReference type="GO" id="GO:0016799">
    <property type="term" value="F:hydrolase activity, hydrolyzing N-glycosyl compounds"/>
    <property type="evidence" value="ECO:0007669"/>
    <property type="project" value="UniProtKB-UniRule"/>
</dbReference>
<dbReference type="GO" id="GO:0006284">
    <property type="term" value="P:base-excision repair"/>
    <property type="evidence" value="ECO:0007669"/>
    <property type="project" value="UniProtKB-UniRule"/>
</dbReference>
<dbReference type="CDD" id="cd00056">
    <property type="entry name" value="ENDO3c"/>
    <property type="match status" value="1"/>
</dbReference>
<dbReference type="Gene3D" id="1.10.1670.10">
    <property type="entry name" value="Helix-hairpin-Helix base-excision DNA repair enzymes (C-terminal)"/>
    <property type="match status" value="1"/>
</dbReference>
<dbReference type="Gene3D" id="1.10.340.30">
    <property type="entry name" value="Hypothetical protein, domain 2"/>
    <property type="match status" value="1"/>
</dbReference>
<dbReference type="HAMAP" id="MF_00241">
    <property type="entry name" value="Ogg"/>
    <property type="match status" value="1"/>
</dbReference>
<dbReference type="InterPro" id="IPR012092">
    <property type="entry name" value="DNA_glyclase/AP_lyase_Ogg"/>
</dbReference>
<dbReference type="InterPro" id="IPR011257">
    <property type="entry name" value="DNA_glycosylase"/>
</dbReference>
<dbReference type="InterPro" id="IPR003265">
    <property type="entry name" value="HhH-GPD_domain"/>
</dbReference>
<dbReference type="InterPro" id="IPR023170">
    <property type="entry name" value="HhH_base_excis_C"/>
</dbReference>
<dbReference type="NCBIfam" id="NF002305">
    <property type="entry name" value="PRK01229.1"/>
    <property type="match status" value="1"/>
</dbReference>
<dbReference type="Pfam" id="PF22175">
    <property type="entry name" value="Ogg-HhH"/>
    <property type="match status" value="1"/>
</dbReference>
<dbReference type="PIRSF" id="PIRSF005954">
    <property type="entry name" value="Thrmst_ogg"/>
    <property type="match status" value="1"/>
</dbReference>
<dbReference type="SMART" id="SM00478">
    <property type="entry name" value="ENDO3c"/>
    <property type="match status" value="1"/>
</dbReference>
<dbReference type="SUPFAM" id="SSF48150">
    <property type="entry name" value="DNA-glycosylase"/>
    <property type="match status" value="1"/>
</dbReference>
<accession>Q972A8</accession>
<comment type="function">
    <text evidence="1">Catalyzes the excision of an oxidatively damaged form of guanine (7,8-dihydro-8-oxoguanine = 8-oxoG) from DNA. Also cleaves the DNA backbone at apurinic/apyrimidinic sites (AP sites).</text>
</comment>
<comment type="catalytic activity">
    <reaction evidence="1">
        <text>2'-deoxyribonucleotide-(2'-deoxyribose 5'-phosphate)-2'-deoxyribonucleotide-DNA = a 3'-end 2'-deoxyribonucleotide-(2,3-dehydro-2,3-deoxyribose 5'-phosphate)-DNA + a 5'-end 5'-phospho-2'-deoxyribonucleoside-DNA + H(+)</text>
        <dbReference type="Rhea" id="RHEA:66592"/>
        <dbReference type="Rhea" id="RHEA-COMP:13180"/>
        <dbReference type="Rhea" id="RHEA-COMP:16897"/>
        <dbReference type="Rhea" id="RHEA-COMP:17067"/>
        <dbReference type="ChEBI" id="CHEBI:15378"/>
        <dbReference type="ChEBI" id="CHEBI:136412"/>
        <dbReference type="ChEBI" id="CHEBI:157695"/>
        <dbReference type="ChEBI" id="CHEBI:167181"/>
        <dbReference type="EC" id="4.2.99.18"/>
    </reaction>
</comment>
<comment type="similarity">
    <text evidence="1">Belongs to the type-2 OGG1 family.</text>
</comment>